<evidence type="ECO:0000255" key="1">
    <source>
        <dbReference type="HAMAP-Rule" id="MF_00388"/>
    </source>
</evidence>
<evidence type="ECO:0000269" key="2">
    <source>
    </source>
</evidence>
<evidence type="ECO:0000269" key="3">
    <source>
    </source>
</evidence>
<evidence type="ECO:0000269" key="4">
    <source>
    </source>
</evidence>
<evidence type="ECO:0000269" key="5">
    <source>
    </source>
</evidence>
<evidence type="ECO:0000269" key="6">
    <source>
    </source>
</evidence>
<evidence type="ECO:0000269" key="7">
    <source>
    </source>
</evidence>
<evidence type="ECO:0000269" key="8">
    <source>
    </source>
</evidence>
<evidence type="ECO:0000269" key="9">
    <source>
    </source>
</evidence>
<evidence type="ECO:0000269" key="10">
    <source>
    </source>
</evidence>
<evidence type="ECO:0000269" key="11">
    <source>
    </source>
</evidence>
<evidence type="ECO:0000269" key="12">
    <source>
    </source>
</evidence>
<evidence type="ECO:0000269" key="13">
    <source>
    </source>
</evidence>
<evidence type="ECO:0000269" key="14">
    <source>
    </source>
</evidence>
<evidence type="ECO:0000269" key="15">
    <source>
    </source>
</evidence>
<evidence type="ECO:0000269" key="16">
    <source>
    </source>
</evidence>
<evidence type="ECO:0000269" key="17">
    <source ref="7"/>
</evidence>
<evidence type="ECO:0000303" key="18">
    <source>
    </source>
</evidence>
<evidence type="ECO:0000303" key="19">
    <source>
    </source>
</evidence>
<evidence type="ECO:0000303" key="20">
    <source>
    </source>
</evidence>
<evidence type="ECO:0000303" key="21">
    <source>
    </source>
</evidence>
<evidence type="ECO:0000303" key="22">
    <source ref="7"/>
</evidence>
<evidence type="ECO:0000305" key="23"/>
<evidence type="ECO:0000305" key="24">
    <source>
    </source>
</evidence>
<evidence type="ECO:0000305" key="25">
    <source>
    </source>
</evidence>
<evidence type="ECO:0000305" key="26">
    <source>
    </source>
</evidence>
<evidence type="ECO:0007829" key="27">
    <source>
        <dbReference type="PDB" id="4MQY"/>
    </source>
</evidence>
<comment type="function">
    <text evidence="1 2 15 16 17">Catalyzes the hydrolysis of UDP-3-O-myristoyl-N-acetylglucosamine to form UDP-3-O-myristoylglucosamine and acetate, the committed step in lipid A biosynthesis.</text>
</comment>
<comment type="catalytic activity">
    <reaction evidence="1 2 4 5 15 16">
        <text>a UDP-3-O-[(3R)-3-hydroxyacyl]-N-acetyl-alpha-D-glucosamine + H2O = a UDP-3-O-[(3R)-3-hydroxyacyl]-alpha-D-glucosamine + acetate</text>
        <dbReference type="Rhea" id="RHEA:67816"/>
        <dbReference type="ChEBI" id="CHEBI:15377"/>
        <dbReference type="ChEBI" id="CHEBI:30089"/>
        <dbReference type="ChEBI" id="CHEBI:137740"/>
        <dbReference type="ChEBI" id="CHEBI:173225"/>
        <dbReference type="EC" id="3.5.1.108"/>
    </reaction>
</comment>
<comment type="cofactor">
    <cofactor evidence="1 2 10">
        <name>Zn(2+)</name>
        <dbReference type="ChEBI" id="CHEBI:29105"/>
    </cofactor>
    <cofactor evidence="9 10">
        <name>Fe(2+)</name>
        <dbReference type="ChEBI" id="CHEBI:29033"/>
    </cofactor>
    <text evidence="2 9 10">Can use either Fe(2+) or Zn(2+). The metal cofactor can switch between Fe(2+) and Zn(2+) in response to metal availability. Metal switching may be important for regulating the LpxC activity upon changes in environmental conditions. Has a significantly higher affinity for Zn(2+), but exhibits higher activity with Fe(2+) (PubMed:20136146, PubMed:20709752). Can also use Co(2+), Ni(2+) and, to a lesser extent, Mn(2+) (PubMed:10026271).</text>
</comment>
<comment type="activity regulation">
    <text evidence="2 3 6 11 12 16">Regulation occurs at the protein level, via degradation of LpxC by the FtsH protease (PubMed:10048027, PubMed:16420369, PubMed:21193611, PubMed:23417489). Degradation is growth rate-dependent. LpxC is degraded rapidly during slow growth, probably to avoid toxic overproduction of lipopolysaccharides, but is highly stable under optimal growth conditions (PubMed:23417489). Increased amounts of LpxC are made under conditions that reduce the lipid A content of cells (PubMed:8824222). Inhibited by metal chelators such as EDTA and dipicolinic acid (DPA) and by high concentrations of Zn(2+) (PubMed:10026271).</text>
</comment>
<comment type="biophysicochemical properties">
    <kinetics>
        <KM evidence="2">2.1 uM for UDP-3-O-myristoyl-N-acetylglucosamine (at 30 degrees Celsius)</KM>
        <KM evidence="2">0.6 uM for UDP-3-O-myristoyl-N-acetylglucosamine (at 1 degree Celsius)</KM>
        <text evidence="2">kcat is 3.3 sec(-1) at 30 degrees Celsius. kcat is 0.09 sec(-1) at 1 degree Celsius.</text>
    </kinetics>
</comment>
<comment type="pathway">
    <text evidence="1 15">Glycolipid biosynthesis; lipid IV(A) biosynthesis; lipid IV(A) from (3R)-3-hydroxytetradecanoyl-[acyl-carrier-protein] and UDP-N-acetyl-alpha-D-glucosamine: step 2/6.</text>
</comment>
<comment type="domain">
    <text evidence="6">The N-terminus is required for deacetylase activity. The C-terminus contains a signal sequence necessary for FtsH-dependent degradation.</text>
</comment>
<comment type="PTM">
    <text evidence="3 6 11 12">Degraded by FtsH.</text>
</comment>
<comment type="miscellaneous">
    <text evidence="7 8 14">Due to its important role in lipid A synthesis, LpxC is an attractive target for the development of new antibacterial agents to treat Gram-negative infections. Many potent LpxC inhibitors with a variety of chemical scaffolds and distinct antibiotic profiles have been discovered.</text>
</comment>
<comment type="similarity">
    <text evidence="1">Belongs to the LpxC family.</text>
</comment>
<accession>P0A725</accession>
<accession>P07652</accession>
<keyword id="KW-0002">3D-structure</keyword>
<keyword id="KW-0903">Direct protein sequencing</keyword>
<keyword id="KW-0378">Hydrolase</keyword>
<keyword id="KW-0408">Iron</keyword>
<keyword id="KW-0441">Lipid A biosynthesis</keyword>
<keyword id="KW-0444">Lipid biosynthesis</keyword>
<keyword id="KW-0443">Lipid metabolism</keyword>
<keyword id="KW-0479">Metal-binding</keyword>
<keyword id="KW-1185">Reference proteome</keyword>
<keyword id="KW-0862">Zinc</keyword>
<reference key="1">
    <citation type="journal article" date="1987" name="J. Bacteriol.">
        <title>Sequence analysis, transcriptional organization, and insertional mutagenesis of the envA gene of Escherichia coli.</title>
        <authorList>
            <person name="Beall B."/>
            <person name="Lutkenhaus J."/>
        </authorList>
    </citation>
    <scope>NUCLEOTIDE SEQUENCE [GENOMIC DNA]</scope>
    <source>
        <strain>K12</strain>
    </source>
</reference>
<reference key="2">
    <citation type="journal article" date="1992" name="Nucleic Acids Res.">
        <title>Systematic sequencing of the Escherichia coli genome: analysis of the 0-2.4 min region.</title>
        <authorList>
            <person name="Yura T."/>
            <person name="Mori H."/>
            <person name="Nagai H."/>
            <person name="Nagata T."/>
            <person name="Ishihama A."/>
            <person name="Fujita N."/>
            <person name="Isono K."/>
            <person name="Mizobuchi K."/>
            <person name="Nakata A."/>
        </authorList>
    </citation>
    <scope>NUCLEOTIDE SEQUENCE [LARGE SCALE GENOMIC DNA]</scope>
    <source>
        <strain>K12</strain>
    </source>
</reference>
<reference key="3">
    <citation type="journal article" date="1997" name="Science">
        <title>The complete genome sequence of Escherichia coli K-12.</title>
        <authorList>
            <person name="Blattner F.R."/>
            <person name="Plunkett G. III"/>
            <person name="Bloch C.A."/>
            <person name="Perna N.T."/>
            <person name="Burland V."/>
            <person name="Riley M."/>
            <person name="Collado-Vides J."/>
            <person name="Glasner J.D."/>
            <person name="Rode C.K."/>
            <person name="Mayhew G.F."/>
            <person name="Gregor J."/>
            <person name="Davis N.W."/>
            <person name="Kirkpatrick H.A."/>
            <person name="Goeden M.A."/>
            <person name="Rose D.J."/>
            <person name="Mau B."/>
            <person name="Shao Y."/>
        </authorList>
    </citation>
    <scope>NUCLEOTIDE SEQUENCE [LARGE SCALE GENOMIC DNA]</scope>
    <source>
        <strain>K12 / MG1655 / ATCC 47076</strain>
    </source>
</reference>
<reference key="4">
    <citation type="journal article" date="2006" name="Mol. Syst. Biol.">
        <title>Highly accurate genome sequences of Escherichia coli K-12 strains MG1655 and W3110.</title>
        <authorList>
            <person name="Hayashi K."/>
            <person name="Morooka N."/>
            <person name="Yamamoto Y."/>
            <person name="Fujita K."/>
            <person name="Isono K."/>
            <person name="Choi S."/>
            <person name="Ohtsubo E."/>
            <person name="Baba T."/>
            <person name="Wanner B.L."/>
            <person name="Mori H."/>
            <person name="Horiuchi T."/>
        </authorList>
    </citation>
    <scope>NUCLEOTIDE SEQUENCE [LARGE SCALE GENOMIC DNA]</scope>
    <source>
        <strain>K12 / W3110 / ATCC 27325 / DSM 5911</strain>
    </source>
</reference>
<reference key="5">
    <citation type="journal article" date="1985" name="Gene">
        <title>The nucleotide sequence of the essential cell-division gene ftsZ of Escherichia coli.</title>
        <authorList>
            <person name="Yi Q.-M."/>
            <person name="Lutkenhaus J."/>
        </authorList>
    </citation>
    <scope>NUCLEOTIDE SEQUENCE [GENOMIC DNA] OF 1-82</scope>
    <source>
        <strain>K12</strain>
    </source>
</reference>
<reference key="6">
    <citation type="journal article" date="1995" name="J. Biol. Chem.">
        <title>The envA permeability/cell division gene of Escherichia coli encodes the second enzyme of lipid A biosynthesis. UDP-3-O-(R-3-hydroxymyristoyl)-N-acetylglucosamine deacetylase.</title>
        <authorList>
            <person name="Young K."/>
            <person name="Silver L.L."/>
            <person name="Bramhill D."/>
            <person name="Cameron P."/>
            <person name="Eveland S.S."/>
            <person name="Raetz C.R."/>
            <person name="Hyland S.A."/>
            <person name="Anderson M.S."/>
        </authorList>
    </citation>
    <scope>PROTEIN SEQUENCE OF 1-19</scope>
    <scope>FUNCTION</scope>
    <scope>CATALYTIC ACTIVITY</scope>
    <scope>PATHWAY</scope>
</reference>
<reference key="7">
    <citation type="journal article" date="1993" name="FASEB J.">
        <title>The second step of lipid A biosynthesis, UDP-3-O-acyl-GlcNAc deacetylase is encoded by the pleotropic permeability/cell division gene envA of E.coli.</title>
        <authorList>
            <person name="Young K."/>
            <person name="Silver L.L."/>
            <person name="Bramhill D."/>
            <person name="Caceres C.A."/>
            <person name="Stachula S.A."/>
            <person name="Shelly S.E."/>
            <person name="Raetz C.R.H."/>
            <person name="Anderson M.S."/>
        </authorList>
    </citation>
    <scope>FUNCTION</scope>
</reference>
<reference key="8">
    <citation type="journal article" date="1996" name="J. Bacteriol.">
        <title>asmB, a suppressor locus for assembly-defective OmpF mutants of Escherichia coli, is allelic to envA (lpxC).</title>
        <authorList>
            <person name="Kloser A.W."/>
            <person name="Laird M.W."/>
            <person name="Misra R."/>
        </authorList>
    </citation>
    <scope>VARIANTS</scope>
</reference>
<reference key="9">
    <citation type="journal article" date="1996" name="J. Biol. Chem.">
        <title>Regulation of UDP-3-O-[R-3-hydroxymyristoyl]-N-acetylglucosamine deacetylase in Escherichia coli. The second enzymatic step of lipid a biosynthesis.</title>
        <authorList>
            <person name="Sorensen P.G."/>
            <person name="Lutkenhaus J."/>
            <person name="Young K."/>
            <person name="Eveland S.S."/>
            <person name="Anderson M.S."/>
            <person name="Raetz C.R."/>
        </authorList>
    </citation>
    <scope>FUNCTION</scope>
    <scope>CATALYTIC ACTIVITY</scope>
    <scope>ACTIVITY REGULATION</scope>
    <source>
        <strain>K12</strain>
    </source>
</reference>
<reference key="10">
    <citation type="journal article" date="1999" name="Biochemistry">
        <title>UDP-3-O-(R-3-hydroxymyristoyl)-N-acetylglucosamine deacetylase of Escherichia coli is a zinc metalloenzyme.</title>
        <authorList>
            <person name="Jackman J.E."/>
            <person name="Raetz C.R."/>
            <person name="Fierke C.A."/>
        </authorList>
    </citation>
    <scope>FUNCTION</scope>
    <scope>CATALYTIC ACTIVITY</scope>
    <scope>COFACTOR</scope>
    <scope>ACTIVITY REGULATION</scope>
    <scope>BIOPHYSICOCHEMICAL PROPERTIES</scope>
</reference>
<reference key="11">
    <citation type="journal article" date="1999" name="Mol. Microbiol.">
        <title>Balanced biosynthesis of major membrane components through regulated degradation of the committed enzyme of lipid A biosynthesis by the AAA protease FtsH (HflB) in Escherichia coli.</title>
        <authorList>
            <person name="Ogura T."/>
            <person name="Inoue K."/>
            <person name="Tatsuta T."/>
            <person name="Suzaki T."/>
            <person name="Karata K."/>
            <person name="Young K."/>
            <person name="Su L.H."/>
            <person name="Fierke C.A."/>
            <person name="Jackman J.E."/>
            <person name="Raetz C.R."/>
            <person name="Coleman J."/>
            <person name="Tomoyasu T."/>
            <person name="Matsuzawa H."/>
        </authorList>
    </citation>
    <scope>DEGRADATION BY FTSH PROTEASE</scope>
    <scope>ACTIVITY REGULATION</scope>
    <source>
        <strain>K12 / W3110</strain>
        <strain>W2252</strain>
    </source>
</reference>
<reference key="12">
    <citation type="journal article" date="2001" name="Biochemistry">
        <title>Site-directed mutagenesis of the bacterial metalloamidase UDP-(3-O-acyl)-N-acetylglucosamine deacetylase (LpxC). Identification of the zinc binding site.</title>
        <authorList>
            <person name="Jackman J.E."/>
            <person name="Raetz C.R."/>
            <person name="Fierke C.A."/>
        </authorList>
    </citation>
    <scope>CATALYTIC ACTIVITY</scope>
    <scope>MUTAGENESIS OF HIS-19; GLU-78; HIS-79; HIS-238; ASP-242; ASP-246 AND HIS-265</scope>
</reference>
<reference key="13">
    <citation type="journal article" date="2005" name="J. Biol. Chem.">
        <title>UDP-3-O-((R)-3-hydroxymyristoyl)-N-acetylglucosamine deacetylase functions through a general acid-base catalyst pair mechanism.</title>
        <authorList>
            <person name="Hernick M."/>
            <person name="Gennadios H.A."/>
            <person name="Whittington D.A."/>
            <person name="Rusche K.M."/>
            <person name="Christianson D.W."/>
            <person name="Fierke C.A."/>
        </authorList>
    </citation>
    <scope>CATALYTIC ACTIVITY</scope>
    <scope>ACTIVE SITE</scope>
</reference>
<reference key="14">
    <citation type="journal article" date="2006" name="Mol. Microbiol.">
        <title>The C-terminal end of LpxC is required for degradation by the FtsH protease.</title>
        <authorList>
            <person name="Fuehrer F."/>
            <person name="Langklotz S."/>
            <person name="Narberhaus F."/>
        </authorList>
    </citation>
    <scope>DEGRADATION BY FTSH PROTEASE</scope>
    <scope>ACTIVITY REGULATION</scope>
    <scope>DOMAIN</scope>
    <source>
        <strain>K12</strain>
    </source>
</reference>
<reference key="15">
    <citation type="journal article" date="2008" name="Curr. Pharm. Biotechnol.">
        <title>Mechanism and inhibition of LpxC: an essential zinc-dependent deacetylase of bacterial lipid A synthesis.</title>
        <authorList>
            <person name="Barb A.W."/>
            <person name="Zhou P."/>
        </authorList>
    </citation>
    <scope>DRUG TARGET</scope>
</reference>
<reference key="16">
    <citation type="journal article" date="2010" name="Biochemistry">
        <title>Activation of Escherichia coli UDP-3-O-[(R)-3-hydroxymyristoyl]-N-acetylglucosamine deacetylase by Fe2+ yields a more efficient enzyme with altered ligand affinity.</title>
        <authorList>
            <person name="Hernick M."/>
            <person name="Gattis S.G."/>
            <person name="Penner-Hahn J.E."/>
            <person name="Fierke C.A."/>
        </authorList>
    </citation>
    <scope>COFACTOR</scope>
    <scope>MUTAGENESIS OF CYS-63</scope>
</reference>
<reference key="17">
    <citation type="journal article" date="2010" name="J. Biol. Chem.">
        <title>Active site metal ion in UDP-3-O-((R)-3-hydroxymyristoyl)-N-acetylglucosamine deacetylase (LpxC) switches between Fe(II) and Zn(II) depending on cellular conditions.</title>
        <authorList>
            <person name="Gattis S.G."/>
            <person name="Hernick M."/>
            <person name="Fierke C.A."/>
        </authorList>
    </citation>
    <scope>COFACTOR</scope>
</reference>
<reference key="18">
    <citation type="journal article" date="2010" name="J. Biomol. Screen.">
        <title>Screening for antibacterial inhibitors of the UDP-3-O-(R-3-hydroxymyristoyl)-N-acetylglucosamine deacetylase (LpxC) using a high-throughput mass spectrometry assay.</title>
        <authorList>
            <person name="Langsdorf E.F."/>
            <person name="Malikzay A."/>
            <person name="Lamarr W.A."/>
            <person name="Daubaras D."/>
            <person name="Kravec C."/>
            <person name="Zhang R."/>
            <person name="Hart R."/>
            <person name="Monsma F."/>
            <person name="Black T."/>
            <person name="Ozbal C.C."/>
            <person name="Miesel L."/>
            <person name="Lunn C.A."/>
        </authorList>
    </citation>
    <scope>DRUG TARGET</scope>
</reference>
<reference key="19">
    <citation type="journal article" date="2011" name="J. Bacteriol.">
        <title>Control of lipopolysaccharide biosynthesis by FtsH-mediated proteolysis of LpxC is conserved in enterobacteria but not in all gram-negative bacteria.</title>
        <authorList>
            <person name="Langklotz S."/>
            <person name="Schaekermann M."/>
            <person name="Narberhaus F."/>
        </authorList>
    </citation>
    <scope>DEGRADATION BY FTSH PROTEASE</scope>
    <scope>ACTIVITY REGULATION</scope>
</reference>
<reference key="20">
    <citation type="journal article" date="2013" name="J. Bacteriol.">
        <title>FtsH-mediated coordination of lipopolysaccharide biosynthesis in Escherichia coli correlates with the growth rate and the alarmone (p)ppGpp.</title>
        <authorList>
            <person name="Schaekermann M."/>
            <person name="Langklotz S."/>
            <person name="Narberhaus F."/>
        </authorList>
    </citation>
    <scope>DEGRADATION BY FTSH PROTEASE</scope>
    <scope>ACTIVITY REGULATION</scope>
</reference>
<reference key="21">
    <citation type="journal article" date="2013" name="J. Biol. Chem.">
        <title>Structure of the bacterial deacetylase LpxC bound to the nucleotide reaction product reveals mechanisms of oxyanion stabilization and proton transfer.</title>
        <authorList>
            <person name="Clayton G.M."/>
            <person name="Klein D.J."/>
            <person name="Rickert K.W."/>
            <person name="Patel S.B."/>
            <person name="Kornienko M."/>
            <person name="Zugay-Murphy J."/>
            <person name="Reid J.C."/>
            <person name="Tummala S."/>
            <person name="Sharma S."/>
            <person name="Singh S.B."/>
            <person name="Miesel L."/>
            <person name="Lumb K.J."/>
            <person name="Soisson S.M."/>
        </authorList>
    </citation>
    <scope>X-RAY CRYSTALLOGRAPHY (2.59 ANGSTROMS) IN COMPLEX WITH UDP-(3-O-(R-HYDROXYMYRISTOYL))-GLUCOSAMINE AND ZINC</scope>
    <scope>ACTIVE SITE</scope>
</reference>
<reference key="22">
    <citation type="journal article" date="2014" name="ACS Chem. Biol.">
        <title>Structural basis of the promiscuous inhibitor susceptibility of Escherichia coli LpxC.</title>
        <authorList>
            <person name="Lee C.J."/>
            <person name="Liang X."/>
            <person name="Gopalaswamy R."/>
            <person name="Najeeb J."/>
            <person name="Ark E.D."/>
            <person name="Toone E.J."/>
            <person name="Zhou P."/>
        </authorList>
    </citation>
    <scope>X-RAY CRYSTALLOGRAPHY (2.00 ANGSTROMS) IN COMPLEX WITH INHIBITORS AND ZINC</scope>
</reference>
<feature type="chain" id="PRO_0000191929" description="UDP-3-O-acyl-N-acetylglucosamine deacetylase">
    <location>
        <begin position="1"/>
        <end position="305"/>
    </location>
</feature>
<feature type="active site" description="Proton donor" evidence="1 24 25">
    <location>
        <position position="265"/>
    </location>
</feature>
<feature type="binding site" evidence="1 13 14">
    <location>
        <position position="79"/>
    </location>
    <ligand>
        <name>Zn(2+)</name>
        <dbReference type="ChEBI" id="CHEBI:29105"/>
    </ligand>
</feature>
<feature type="binding site" evidence="1 13 14">
    <location>
        <position position="238"/>
    </location>
    <ligand>
        <name>Zn(2+)</name>
        <dbReference type="ChEBI" id="CHEBI:29105"/>
    </ligand>
</feature>
<feature type="binding site" evidence="1 13 14">
    <location>
        <position position="242"/>
    </location>
    <ligand>
        <name>Zn(2+)</name>
        <dbReference type="ChEBI" id="CHEBI:29105"/>
    </ligand>
</feature>
<feature type="sequence variant" description="In ASMB2/3; reduced activity." evidence="26">
    <original>F</original>
    <variation>S</variation>
    <location>
        <position position="50"/>
    </location>
</feature>
<feature type="sequence variant" description="In ASMB1; reduced activity." evidence="26">
    <original>G</original>
    <variation>S</variation>
    <location>
        <position position="210"/>
    </location>
</feature>
<feature type="mutagenesis site" description="1400-fold decrease in activity." evidence="4">
    <original>H</original>
    <variation>A</variation>
    <location>
        <position position="19"/>
    </location>
</feature>
<feature type="mutagenesis site" description="90-fold decrease in activity." evidence="4">
    <original>H</original>
    <variation>Q</variation>
    <location>
        <position position="19"/>
    </location>
</feature>
<feature type="mutagenesis site" description="200-fold decrease in activity." evidence="4">
    <original>H</original>
    <variation>Y</variation>
    <location>
        <position position="19"/>
    </location>
</feature>
<feature type="mutagenesis site" description="Reduces level of inhibition by metal ions." evidence="9">
    <original>C</original>
    <variation>A</variation>
    <location>
        <position position="63"/>
    </location>
</feature>
<feature type="mutagenesis site" description="700-fold decrease in activity." evidence="4">
    <original>E</original>
    <variation>A</variation>
    <location>
        <position position="78"/>
    </location>
</feature>
<feature type="mutagenesis site" description="3000-fold decrease in activity." evidence="4">
    <original>E</original>
    <variation>Q</variation>
    <location>
        <position position="78"/>
    </location>
</feature>
<feature type="mutagenesis site" description="2300-fold decrease in activity." evidence="4">
    <original>H</original>
    <variation>A</variation>
    <location>
        <position position="79"/>
    </location>
</feature>
<feature type="mutagenesis site" description="1200-fold decrease in activity." evidence="4">
    <original>H</original>
    <variation>Q</variation>
    <location>
        <position position="79"/>
    </location>
</feature>
<feature type="mutagenesis site" description="1100-fold decrease in activity." evidence="4">
    <original>H</original>
    <variation>A</variation>
    <location>
        <position position="238"/>
    </location>
</feature>
<feature type="mutagenesis site" description="10-fold decrease in activity." evidence="4">
    <original>D</original>
    <variation>A</variation>
    <location>
        <position position="242"/>
    </location>
</feature>
<feature type="mutagenesis site" description="2300-fold decrease in activity." evidence="4">
    <original>D</original>
    <variation>Q</variation>
    <location>
        <position position="242"/>
    </location>
</feature>
<feature type="mutagenesis site" description="1800-fold decrease in activity." evidence="4">
    <original>D</original>
    <variation>A</variation>
    <location>
        <position position="246"/>
    </location>
</feature>
<feature type="mutagenesis site" description="3800-fold decrease in activity." evidence="4">
    <original>H</original>
    <variation>A</variation>
    <location>
        <position position="265"/>
    </location>
</feature>
<feature type="mutagenesis site" description="5600-fold decrease in activity." evidence="4">
    <original>H</original>
    <variation>Q</variation>
    <location>
        <position position="265"/>
    </location>
</feature>
<feature type="strand" evidence="27">
    <location>
        <begin position="3"/>
        <end position="9"/>
    </location>
</feature>
<feature type="strand" evidence="27">
    <location>
        <begin position="11"/>
        <end position="16"/>
    </location>
</feature>
<feature type="turn" evidence="27">
    <location>
        <begin position="18"/>
        <end position="20"/>
    </location>
</feature>
<feature type="strand" evidence="27">
    <location>
        <begin position="22"/>
        <end position="29"/>
    </location>
</feature>
<feature type="strand" evidence="27">
    <location>
        <begin position="37"/>
        <end position="41"/>
    </location>
</feature>
<feature type="strand" evidence="27">
    <location>
        <begin position="43"/>
        <end position="46"/>
    </location>
</feature>
<feature type="strand" evidence="27">
    <location>
        <begin position="48"/>
        <end position="51"/>
    </location>
</feature>
<feature type="helix" evidence="27">
    <location>
        <begin position="54"/>
        <end position="56"/>
    </location>
</feature>
<feature type="strand" evidence="27">
    <location>
        <begin position="61"/>
        <end position="63"/>
    </location>
</feature>
<feature type="strand" evidence="27">
    <location>
        <begin position="65"/>
        <end position="67"/>
    </location>
</feature>
<feature type="strand" evidence="27">
    <location>
        <begin position="73"/>
        <end position="75"/>
    </location>
</feature>
<feature type="helix" evidence="27">
    <location>
        <begin position="78"/>
        <end position="87"/>
    </location>
</feature>
<feature type="strand" evidence="27">
    <location>
        <begin position="91"/>
        <end position="100"/>
    </location>
</feature>
<feature type="strand" evidence="27">
    <location>
        <begin position="106"/>
        <end position="108"/>
    </location>
</feature>
<feature type="helix" evidence="27">
    <location>
        <begin position="109"/>
        <end position="118"/>
    </location>
</feature>
<feature type="strand" evidence="27">
    <location>
        <begin position="120"/>
        <end position="126"/>
    </location>
</feature>
<feature type="strand" evidence="27">
    <location>
        <begin position="129"/>
        <end position="132"/>
    </location>
</feature>
<feature type="strand" evidence="27">
    <location>
        <begin position="136"/>
        <end position="140"/>
    </location>
</feature>
<feature type="strand" evidence="27">
    <location>
        <begin position="143"/>
        <end position="148"/>
    </location>
</feature>
<feature type="strand" evidence="27">
    <location>
        <begin position="151"/>
        <end position="158"/>
    </location>
</feature>
<feature type="helix" evidence="27">
    <location>
        <begin position="168"/>
        <end position="170"/>
    </location>
</feature>
<feature type="strand" evidence="27">
    <location>
        <begin position="171"/>
        <end position="176"/>
    </location>
</feature>
<feature type="helix" evidence="27">
    <location>
        <begin position="179"/>
        <end position="185"/>
    </location>
</feature>
<feature type="turn" evidence="27">
    <location>
        <begin position="186"/>
        <end position="188"/>
    </location>
</feature>
<feature type="strand" evidence="27">
    <location>
        <begin position="192"/>
        <end position="194"/>
    </location>
</feature>
<feature type="helix" evidence="27">
    <location>
        <begin position="195"/>
        <end position="202"/>
    </location>
</feature>
<feature type="turn" evidence="27">
    <location>
        <begin position="203"/>
        <end position="205"/>
    </location>
</feature>
<feature type="strand" evidence="27">
    <location>
        <begin position="214"/>
        <end position="218"/>
    </location>
</feature>
<feature type="strand" evidence="27">
    <location>
        <begin position="220"/>
        <end position="223"/>
    </location>
</feature>
<feature type="helix" evidence="27">
    <location>
        <begin position="234"/>
        <end position="247"/>
    </location>
</feature>
<feature type="helix" evidence="27">
    <location>
        <begin position="248"/>
        <end position="250"/>
    </location>
</feature>
<feature type="strand" evidence="27">
    <location>
        <begin position="254"/>
        <end position="262"/>
    </location>
</feature>
<feature type="helix" evidence="27">
    <location>
        <begin position="265"/>
        <end position="277"/>
    </location>
</feature>
<feature type="helix" evidence="27">
    <location>
        <begin position="279"/>
        <end position="281"/>
    </location>
</feature>
<feature type="strand" evidence="27">
    <location>
        <begin position="282"/>
        <end position="285"/>
    </location>
</feature>
<feature type="helix" evidence="27">
    <location>
        <begin position="290"/>
        <end position="292"/>
    </location>
</feature>
<feature type="helix" evidence="27">
    <location>
        <begin position="295"/>
        <end position="297"/>
    </location>
</feature>
<organism>
    <name type="scientific">Escherichia coli (strain K12)</name>
    <dbReference type="NCBI Taxonomy" id="83333"/>
    <lineage>
        <taxon>Bacteria</taxon>
        <taxon>Pseudomonadati</taxon>
        <taxon>Pseudomonadota</taxon>
        <taxon>Gammaproteobacteria</taxon>
        <taxon>Enterobacterales</taxon>
        <taxon>Enterobacteriaceae</taxon>
        <taxon>Escherichia</taxon>
    </lineage>
</organism>
<sequence>MIKQRTLKRIVQATGVGLHTGKKVTLTLRPAPANTGVIYRRTDLNPPVDFPADAKSVRDTMLCTCLVNEHDVRISTVEHLNAALAGLGIDNIVIEVNAPEIPIMDGSAAPFVYLLLDAGIDELNCAKKFVRIKETVRVEDGDKWAEFKPYNGFSLDFTIDFNHPAIDSSNQRYAMNFSADAFMRQISRARTFGFMRDIEYLQSRGLCLGGSFDCAIVVDDYRVLNEDGLRFEDEFVRHKMLDAIGDLFMCGHNIIGAFTAYKSGHALNNKLLQAVLAKQEAWEYVTFQDDAELPLAFKAPSAVLA</sequence>
<dbReference type="EC" id="3.5.1.108" evidence="1 2 4 5 15 16"/>
<dbReference type="EMBL" id="M19211">
    <property type="protein sequence ID" value="AAA83849.1"/>
    <property type="molecule type" value="Genomic_DNA"/>
</dbReference>
<dbReference type="EMBL" id="X55034">
    <property type="protein sequence ID" value="CAA38873.1"/>
    <property type="molecule type" value="Genomic_DNA"/>
</dbReference>
<dbReference type="EMBL" id="U00096">
    <property type="protein sequence ID" value="AAC73207.1"/>
    <property type="molecule type" value="Genomic_DNA"/>
</dbReference>
<dbReference type="EMBL" id="AP009048">
    <property type="protein sequence ID" value="BAB96664.1"/>
    <property type="molecule type" value="Genomic_DNA"/>
</dbReference>
<dbReference type="PIR" id="A28381">
    <property type="entry name" value="BVECEA"/>
</dbReference>
<dbReference type="RefSeq" id="NP_414638.1">
    <property type="nucleotide sequence ID" value="NC_000913.3"/>
</dbReference>
<dbReference type="RefSeq" id="WP_000595482.1">
    <property type="nucleotide sequence ID" value="NZ_STEB01000010.1"/>
</dbReference>
<dbReference type="PDB" id="4IS9">
    <property type="method" value="X-ray"/>
    <property type="resolution" value="2.13 A"/>
    <property type="chains" value="A/B=1-300"/>
</dbReference>
<dbReference type="PDB" id="4ISA">
    <property type="method" value="X-ray"/>
    <property type="resolution" value="1.80 A"/>
    <property type="chains" value="A=1-300"/>
</dbReference>
<dbReference type="PDB" id="4MDT">
    <property type="method" value="X-ray"/>
    <property type="resolution" value="2.59 A"/>
    <property type="chains" value="A/B/C/D=1-305"/>
</dbReference>
<dbReference type="PDB" id="4MQY">
    <property type="method" value="X-ray"/>
    <property type="resolution" value="2.00 A"/>
    <property type="chains" value="A=1-305"/>
</dbReference>
<dbReference type="PDB" id="7PHJ">
    <property type="method" value="X-ray"/>
    <property type="resolution" value="2.45 A"/>
    <property type="chains" value="A=1-305"/>
</dbReference>
<dbReference type="PDBsum" id="4IS9"/>
<dbReference type="PDBsum" id="4ISA"/>
<dbReference type="PDBsum" id="4MDT"/>
<dbReference type="PDBsum" id="4MQY"/>
<dbReference type="PDBsum" id="7PHJ"/>
<dbReference type="SMR" id="P0A725"/>
<dbReference type="BioGRID" id="4261858">
    <property type="interactions" value="383"/>
</dbReference>
<dbReference type="BioGRID" id="849217">
    <property type="interactions" value="2"/>
</dbReference>
<dbReference type="DIP" id="DIP-48045N"/>
<dbReference type="FunCoup" id="P0A725">
    <property type="interactions" value="528"/>
</dbReference>
<dbReference type="IntAct" id="P0A725">
    <property type="interactions" value="5"/>
</dbReference>
<dbReference type="STRING" id="511145.b0096"/>
<dbReference type="BindingDB" id="P0A725"/>
<dbReference type="ChEMBL" id="CHEMBL5244"/>
<dbReference type="SwissLipids" id="SLP:000001888"/>
<dbReference type="jPOST" id="P0A725"/>
<dbReference type="PaxDb" id="511145-b0096"/>
<dbReference type="EnsemblBacteria" id="AAC73207">
    <property type="protein sequence ID" value="AAC73207"/>
    <property type="gene ID" value="b0096"/>
</dbReference>
<dbReference type="GeneID" id="93777338"/>
<dbReference type="GeneID" id="944816"/>
<dbReference type="KEGG" id="ecj:JW0094"/>
<dbReference type="KEGG" id="eco:b0096"/>
<dbReference type="KEGG" id="ecoc:C3026_00385"/>
<dbReference type="PATRIC" id="fig|1411691.4.peg.2184"/>
<dbReference type="EchoBASE" id="EB0261"/>
<dbReference type="eggNOG" id="COG0774">
    <property type="taxonomic scope" value="Bacteria"/>
</dbReference>
<dbReference type="HOGENOM" id="CLU_046528_1_0_6"/>
<dbReference type="InParanoid" id="P0A725"/>
<dbReference type="OMA" id="IVFYRSD"/>
<dbReference type="OrthoDB" id="9802746at2"/>
<dbReference type="PhylomeDB" id="P0A725"/>
<dbReference type="BioCyc" id="EcoCyc:UDPACYLGLCNACDEACETYL-MONOMER"/>
<dbReference type="BioCyc" id="MetaCyc:UDPACYLGLCNACDEACETYL-MONOMER"/>
<dbReference type="BRENDA" id="3.5.1.108">
    <property type="organism ID" value="2026"/>
</dbReference>
<dbReference type="SABIO-RK" id="P0A725"/>
<dbReference type="UniPathway" id="UPA00359">
    <property type="reaction ID" value="UER00478"/>
</dbReference>
<dbReference type="EvolutionaryTrace" id="P0A725"/>
<dbReference type="PRO" id="PR:P0A725"/>
<dbReference type="Proteomes" id="UP000000625">
    <property type="component" value="Chromosome"/>
</dbReference>
<dbReference type="GO" id="GO:0005737">
    <property type="term" value="C:cytoplasm"/>
    <property type="evidence" value="ECO:0000314"/>
    <property type="project" value="EcoCyc"/>
</dbReference>
<dbReference type="GO" id="GO:0016020">
    <property type="term" value="C:membrane"/>
    <property type="evidence" value="ECO:0007669"/>
    <property type="project" value="GOC"/>
</dbReference>
<dbReference type="GO" id="GO:0019213">
    <property type="term" value="F:deacetylase activity"/>
    <property type="evidence" value="ECO:0000314"/>
    <property type="project" value="EcoliWiki"/>
</dbReference>
<dbReference type="GO" id="GO:0005506">
    <property type="term" value="F:iron ion binding"/>
    <property type="evidence" value="ECO:0000314"/>
    <property type="project" value="EcoCyc"/>
</dbReference>
<dbReference type="GO" id="GO:0103117">
    <property type="term" value="F:UDP-3-O-acyl-N-acetylglucosamine deacetylase activity"/>
    <property type="evidence" value="ECO:0007669"/>
    <property type="project" value="UniProtKB-UniRule"/>
</dbReference>
<dbReference type="GO" id="GO:0008270">
    <property type="term" value="F:zinc ion binding"/>
    <property type="evidence" value="ECO:0000314"/>
    <property type="project" value="EcoCyc"/>
</dbReference>
<dbReference type="GO" id="GO:0009245">
    <property type="term" value="P:lipid A biosynthetic process"/>
    <property type="evidence" value="ECO:0000315"/>
    <property type="project" value="EcoliWiki"/>
</dbReference>
<dbReference type="FunFam" id="3.30.1700.10:FF:000001">
    <property type="entry name" value="UDP-3-O-acyl-N-acetylglucosamine deacetylase"/>
    <property type="match status" value="1"/>
</dbReference>
<dbReference type="FunFam" id="3.30.230.20:FF:000001">
    <property type="entry name" value="UDP-3-O-acyl-N-acetylglucosamine deacetylase"/>
    <property type="match status" value="1"/>
</dbReference>
<dbReference type="Gene3D" id="3.30.230.20">
    <property type="entry name" value="lpxc deacetylase, domain 1"/>
    <property type="match status" value="1"/>
</dbReference>
<dbReference type="Gene3D" id="3.30.1700.10">
    <property type="entry name" value="lpxc deacetylase, domain 2"/>
    <property type="match status" value="1"/>
</dbReference>
<dbReference type="HAMAP" id="MF_00388">
    <property type="entry name" value="LpxC"/>
    <property type="match status" value="1"/>
</dbReference>
<dbReference type="InterPro" id="IPR020568">
    <property type="entry name" value="Ribosomal_Su5_D2-typ_SF"/>
</dbReference>
<dbReference type="InterPro" id="IPR004463">
    <property type="entry name" value="UDP-acyl_GlcNac_deAcase"/>
</dbReference>
<dbReference type="InterPro" id="IPR011334">
    <property type="entry name" value="UDP-acyl_GlcNac_deAcase_C"/>
</dbReference>
<dbReference type="InterPro" id="IPR015870">
    <property type="entry name" value="UDP-acyl_N-AcGlcN_deAcase_N"/>
</dbReference>
<dbReference type="NCBIfam" id="TIGR00325">
    <property type="entry name" value="lpxC"/>
    <property type="match status" value="1"/>
</dbReference>
<dbReference type="PANTHER" id="PTHR33694">
    <property type="entry name" value="UDP-3-O-ACYL-N-ACETYLGLUCOSAMINE DEACETYLASE 1, MITOCHONDRIAL-RELATED"/>
    <property type="match status" value="1"/>
</dbReference>
<dbReference type="PANTHER" id="PTHR33694:SF1">
    <property type="entry name" value="UDP-3-O-ACYL-N-ACETYLGLUCOSAMINE DEACETYLASE 1, MITOCHONDRIAL-RELATED"/>
    <property type="match status" value="1"/>
</dbReference>
<dbReference type="Pfam" id="PF03331">
    <property type="entry name" value="LpxC"/>
    <property type="match status" value="1"/>
</dbReference>
<dbReference type="SUPFAM" id="SSF54211">
    <property type="entry name" value="Ribosomal protein S5 domain 2-like"/>
    <property type="match status" value="2"/>
</dbReference>
<proteinExistence type="evidence at protein level"/>
<gene>
    <name evidence="1 19" type="primary">lpxC</name>
    <name evidence="20" type="synonym">asmB</name>
    <name evidence="18" type="synonym">envA</name>
    <name type="ordered locus">b0096</name>
    <name type="ordered locus">JW0094</name>
</gene>
<name>LPXC_ECOLI</name>
<protein>
    <recommendedName>
        <fullName evidence="1 19">UDP-3-O-acyl-N-acetylglucosamine deacetylase</fullName>
        <shortName evidence="1 19 22">UDP-3-O-acyl-GlcNAc deacetylase</shortName>
        <ecNumber evidence="1 2 4 5 15 16">3.5.1.108</ecNumber>
    </recommendedName>
    <alternativeName>
        <fullName evidence="23">Protein EnvA</fullName>
    </alternativeName>
    <alternativeName>
        <fullName evidence="1 21">UDP-3-O-[R-3-hydroxymyristoyl]-N-acetylglucosamine deacetylase</fullName>
    </alternativeName>
</protein>